<feature type="chain" id="PRO_1000082775" description="UPF0246 protein YaaA">
    <location>
        <begin position="1"/>
        <end position="257"/>
    </location>
</feature>
<dbReference type="EMBL" id="CP000886">
    <property type="protein sequence ID" value="ABX65449.1"/>
    <property type="molecule type" value="Genomic_DNA"/>
</dbReference>
<dbReference type="RefSeq" id="WP_000906175.1">
    <property type="nucleotide sequence ID" value="NC_010102.1"/>
</dbReference>
<dbReference type="SMR" id="A9MXH3"/>
<dbReference type="KEGG" id="spq:SPAB_00005"/>
<dbReference type="PATRIC" id="fig|1016998.12.peg.4"/>
<dbReference type="HOGENOM" id="CLU_061989_0_0_6"/>
<dbReference type="BioCyc" id="SENT1016998:SPAB_RS00030-MONOMER"/>
<dbReference type="Proteomes" id="UP000008556">
    <property type="component" value="Chromosome"/>
</dbReference>
<dbReference type="GO" id="GO:0005829">
    <property type="term" value="C:cytosol"/>
    <property type="evidence" value="ECO:0007669"/>
    <property type="project" value="TreeGrafter"/>
</dbReference>
<dbReference type="GO" id="GO:0033194">
    <property type="term" value="P:response to hydroperoxide"/>
    <property type="evidence" value="ECO:0007669"/>
    <property type="project" value="TreeGrafter"/>
</dbReference>
<dbReference type="HAMAP" id="MF_00652">
    <property type="entry name" value="UPF0246"/>
    <property type="match status" value="1"/>
</dbReference>
<dbReference type="InterPro" id="IPR005583">
    <property type="entry name" value="YaaA"/>
</dbReference>
<dbReference type="NCBIfam" id="NF002541">
    <property type="entry name" value="PRK02101.1-1"/>
    <property type="match status" value="1"/>
</dbReference>
<dbReference type="NCBIfam" id="NF002542">
    <property type="entry name" value="PRK02101.1-3"/>
    <property type="match status" value="1"/>
</dbReference>
<dbReference type="PANTHER" id="PTHR30283:SF4">
    <property type="entry name" value="PEROXIDE STRESS RESISTANCE PROTEIN YAAA"/>
    <property type="match status" value="1"/>
</dbReference>
<dbReference type="PANTHER" id="PTHR30283">
    <property type="entry name" value="PEROXIDE STRESS RESPONSE PROTEIN YAAA"/>
    <property type="match status" value="1"/>
</dbReference>
<dbReference type="Pfam" id="PF03883">
    <property type="entry name" value="H2O2_YaaD"/>
    <property type="match status" value="1"/>
</dbReference>
<sequence>MLILISPAKTLDYQSPLATTRYTQPELLDHSQQLIQQARQLSAPQISRLMGISDKLADLNATRFHDWQPHFTPDNARQAILAFKGDVYTGLQAETFNDADFDFAQQHLRMLSGLYGVLRPLDLMQPYRLEMGIRLENPRGKDLYQFWGDIITDKLNEALEAQGDRVVVNLASEEYFKSVKPKKLNAELIKPVFLDEKNGKFKVVSFYAKKARGLMSRFIIENRLTKPEQLTAFDREGYFFDEETSTQDELVFKRYEQ</sequence>
<comment type="similarity">
    <text evidence="1">Belongs to the UPF0246 family.</text>
</comment>
<proteinExistence type="inferred from homology"/>
<accession>A9MXH3</accession>
<organism>
    <name type="scientific">Salmonella paratyphi B (strain ATCC BAA-1250 / SPB7)</name>
    <dbReference type="NCBI Taxonomy" id="1016998"/>
    <lineage>
        <taxon>Bacteria</taxon>
        <taxon>Pseudomonadati</taxon>
        <taxon>Pseudomonadota</taxon>
        <taxon>Gammaproteobacteria</taxon>
        <taxon>Enterobacterales</taxon>
        <taxon>Enterobacteriaceae</taxon>
        <taxon>Salmonella</taxon>
    </lineage>
</organism>
<name>YAAA_SALPB</name>
<protein>
    <recommendedName>
        <fullName evidence="1">UPF0246 protein YaaA</fullName>
    </recommendedName>
</protein>
<reference key="1">
    <citation type="submission" date="2007-11" db="EMBL/GenBank/DDBJ databases">
        <authorList>
            <consortium name="The Salmonella enterica serovar Paratyphi B Genome Sequencing Project"/>
            <person name="McClelland M."/>
            <person name="Sanderson E.K."/>
            <person name="Porwollik S."/>
            <person name="Spieth J."/>
            <person name="Clifton W.S."/>
            <person name="Fulton R."/>
            <person name="Cordes M."/>
            <person name="Wollam A."/>
            <person name="Shah N."/>
            <person name="Pepin K."/>
            <person name="Bhonagiri V."/>
            <person name="Nash W."/>
            <person name="Johnson M."/>
            <person name="Thiruvilangam P."/>
            <person name="Wilson R."/>
        </authorList>
    </citation>
    <scope>NUCLEOTIDE SEQUENCE [LARGE SCALE GENOMIC DNA]</scope>
    <source>
        <strain>ATCC BAA-1250 / SPB7</strain>
    </source>
</reference>
<evidence type="ECO:0000255" key="1">
    <source>
        <dbReference type="HAMAP-Rule" id="MF_00652"/>
    </source>
</evidence>
<gene>
    <name evidence="1" type="primary">yaaA</name>
    <name type="ordered locus">SPAB_00005</name>
</gene>